<sequence>MGSKTLPAPVPIHPSLQLTNYSFLQAVNGLPTVPSDHLPNLYGFSALHAVHLHQWTLGYPAMHLPRSSFSKVPGTVSSLVDARFQLPAFPWFPHVIQPKPEITAGGSVPALKTKPRFDFANLALAATQEDPAKLGRGEGPGSPAGGLGALLDVTKLSPEKKPTRGRLPSKTKKEFVCKFCGRHFTKSYNLLIHERTHTDERPYTCDICHKAFRRQDHLRDHRYIHSKEKPFKCQECGKGFCQSRTLAVHKTLHSQVKELKTSKIKC</sequence>
<dbReference type="EMBL" id="AB082568">
    <property type="protein sequence ID" value="BAB92079.1"/>
    <property type="molecule type" value="mRNA"/>
</dbReference>
<dbReference type="EMBL" id="AK074591">
    <property type="protein sequence ID" value="BAC11079.1"/>
    <property type="molecule type" value="mRNA"/>
</dbReference>
<dbReference type="EMBL" id="AK122756">
    <property type="protein sequence ID" value="BAG53709.1"/>
    <property type="molecule type" value="mRNA"/>
</dbReference>
<dbReference type="EMBL" id="DQ021502">
    <property type="protein sequence ID" value="AAY26397.1"/>
    <property type="molecule type" value="Genomic_DNA"/>
</dbReference>
<dbReference type="EMBL" id="AC018741">
    <property type="protein sequence ID" value="AAY14760.1"/>
    <property type="molecule type" value="Genomic_DNA"/>
</dbReference>
<dbReference type="EMBL" id="CH471053">
    <property type="protein sequence ID" value="EAX00846.1"/>
    <property type="molecule type" value="Genomic_DNA"/>
</dbReference>
<dbReference type="EMBL" id="CH471053">
    <property type="protein sequence ID" value="EAX00848.1"/>
    <property type="molecule type" value="Genomic_DNA"/>
</dbReference>
<dbReference type="EMBL" id="BC025712">
    <property type="protein sequence ID" value="AAH25712.1"/>
    <property type="molecule type" value="mRNA"/>
</dbReference>
<dbReference type="CCDS" id="CCDS1694.1"/>
<dbReference type="RefSeq" id="NP_660303.1">
    <property type="nucleotide sequence ID" value="NM_145260.3"/>
</dbReference>
<dbReference type="RefSeq" id="XP_006712005.1">
    <property type="nucleotide sequence ID" value="XM_006711942.5"/>
</dbReference>
<dbReference type="RefSeq" id="XP_054196508.1">
    <property type="nucleotide sequence ID" value="XM_054340533.1"/>
</dbReference>
<dbReference type="SMR" id="Q8TAX0"/>
<dbReference type="BioGRID" id="126234">
    <property type="interactions" value="3"/>
</dbReference>
<dbReference type="FunCoup" id="Q8TAX0">
    <property type="interactions" value="521"/>
</dbReference>
<dbReference type="STRING" id="9606.ENSP00000272223"/>
<dbReference type="BindingDB" id="Q8TAX0"/>
<dbReference type="ChEMBL" id="CHEMBL4523406"/>
<dbReference type="iPTMnet" id="Q8TAX0"/>
<dbReference type="PhosphoSitePlus" id="Q8TAX0"/>
<dbReference type="BioMuta" id="OSR1"/>
<dbReference type="DMDM" id="74762600"/>
<dbReference type="jPOST" id="Q8TAX0"/>
<dbReference type="MassIVE" id="Q8TAX0"/>
<dbReference type="PaxDb" id="9606-ENSP00000272223"/>
<dbReference type="PeptideAtlas" id="Q8TAX0"/>
<dbReference type="Antibodypedia" id="12948">
    <property type="antibodies" value="372 antibodies from 30 providers"/>
</dbReference>
<dbReference type="DNASU" id="130497"/>
<dbReference type="Ensembl" id="ENST00000272223.3">
    <property type="protein sequence ID" value="ENSP00000272223.2"/>
    <property type="gene ID" value="ENSG00000143867.7"/>
</dbReference>
<dbReference type="GeneID" id="130497"/>
<dbReference type="KEGG" id="hsa:130497"/>
<dbReference type="MANE-Select" id="ENST00000272223.3">
    <property type="protein sequence ID" value="ENSP00000272223.2"/>
    <property type="RefSeq nucleotide sequence ID" value="NM_145260.3"/>
    <property type="RefSeq protein sequence ID" value="NP_660303.1"/>
</dbReference>
<dbReference type="UCSC" id="uc002rdc.4">
    <property type="organism name" value="human"/>
</dbReference>
<dbReference type="AGR" id="HGNC:8111"/>
<dbReference type="CTD" id="130497"/>
<dbReference type="DisGeNET" id="130497"/>
<dbReference type="GeneCards" id="OSR1"/>
<dbReference type="HGNC" id="HGNC:8111">
    <property type="gene designation" value="OSR1"/>
</dbReference>
<dbReference type="HPA" id="ENSG00000143867">
    <property type="expression patterns" value="Tissue enhanced (urinary)"/>
</dbReference>
<dbReference type="MalaCards" id="OSR1"/>
<dbReference type="MIM" id="608891">
    <property type="type" value="gene"/>
</dbReference>
<dbReference type="neXtProt" id="NX_Q8TAX0"/>
<dbReference type="OpenTargets" id="ENSG00000143867"/>
<dbReference type="PharmGKB" id="PA164742217"/>
<dbReference type="VEuPathDB" id="HostDB:ENSG00000143867"/>
<dbReference type="eggNOG" id="KOG1721">
    <property type="taxonomic scope" value="Eukaryota"/>
</dbReference>
<dbReference type="GeneTree" id="ENSGT00940000158993"/>
<dbReference type="HOGENOM" id="CLU_051854_0_0_1"/>
<dbReference type="InParanoid" id="Q8TAX0"/>
<dbReference type="OMA" id="CIFCKEE"/>
<dbReference type="OrthoDB" id="9451254at2759"/>
<dbReference type="PAN-GO" id="Q8TAX0">
    <property type="GO annotations" value="6 GO annotations based on evolutionary models"/>
</dbReference>
<dbReference type="PhylomeDB" id="Q8TAX0"/>
<dbReference type="TreeFam" id="TF350876"/>
<dbReference type="PathwayCommons" id="Q8TAX0"/>
<dbReference type="Reactome" id="R-HSA-9761174">
    <property type="pathway name" value="Formation of intermediate mesoderm"/>
</dbReference>
<dbReference type="Reactome" id="R-HSA-9830364">
    <property type="pathway name" value="Formation of the nephric duct"/>
</dbReference>
<dbReference type="SignaLink" id="Q8TAX0"/>
<dbReference type="BioGRID-ORCS" id="130497">
    <property type="hits" value="17 hits in 1171 CRISPR screens"/>
</dbReference>
<dbReference type="ChiTaRS" id="OSR1">
    <property type="organism name" value="human"/>
</dbReference>
<dbReference type="GeneWiki" id="OSR1"/>
<dbReference type="GenomeRNAi" id="130497"/>
<dbReference type="Pharos" id="Q8TAX0">
    <property type="development level" value="Tchem"/>
</dbReference>
<dbReference type="PRO" id="PR:Q8TAX0"/>
<dbReference type="Proteomes" id="UP000005640">
    <property type="component" value="Chromosome 2"/>
</dbReference>
<dbReference type="RNAct" id="Q8TAX0">
    <property type="molecule type" value="protein"/>
</dbReference>
<dbReference type="Bgee" id="ENSG00000143867">
    <property type="expression patterns" value="Expressed in descending thoracic aorta and 104 other cell types or tissues"/>
</dbReference>
<dbReference type="GO" id="GO:0005938">
    <property type="term" value="C:cell cortex"/>
    <property type="evidence" value="ECO:0000250"/>
    <property type="project" value="ParkinsonsUK-UCL"/>
</dbReference>
<dbReference type="GO" id="GO:0000785">
    <property type="term" value="C:chromatin"/>
    <property type="evidence" value="ECO:0000247"/>
    <property type="project" value="NTNU_SB"/>
</dbReference>
<dbReference type="GO" id="GO:0005829">
    <property type="term" value="C:cytosol"/>
    <property type="evidence" value="ECO:0000250"/>
    <property type="project" value="ParkinsonsUK-UCL"/>
</dbReference>
<dbReference type="GO" id="GO:0005634">
    <property type="term" value="C:nucleus"/>
    <property type="evidence" value="ECO:0000314"/>
    <property type="project" value="LIFEdb"/>
</dbReference>
<dbReference type="GO" id="GO:0000981">
    <property type="term" value="F:DNA-binding transcription factor activity, RNA polymerase II-specific"/>
    <property type="evidence" value="ECO:0000247"/>
    <property type="project" value="NTNU_SB"/>
</dbReference>
<dbReference type="GO" id="GO:0000977">
    <property type="term" value="F:RNA polymerase II transcription regulatory region sequence-specific DNA binding"/>
    <property type="evidence" value="ECO:0000318"/>
    <property type="project" value="GO_Central"/>
</dbReference>
<dbReference type="GO" id="GO:1990837">
    <property type="term" value="F:sequence-specific double-stranded DNA binding"/>
    <property type="evidence" value="ECO:0000314"/>
    <property type="project" value="ARUK-UCL"/>
</dbReference>
<dbReference type="GO" id="GO:0008270">
    <property type="term" value="F:zinc ion binding"/>
    <property type="evidence" value="ECO:0007669"/>
    <property type="project" value="UniProtKB-KW"/>
</dbReference>
<dbReference type="GO" id="GO:0030154">
    <property type="term" value="P:cell differentiation"/>
    <property type="evidence" value="ECO:0000250"/>
    <property type="project" value="BHF-UCL"/>
</dbReference>
<dbReference type="GO" id="GO:0072111">
    <property type="term" value="P:cell proliferation involved in kidney development"/>
    <property type="evidence" value="ECO:0000250"/>
    <property type="project" value="UniProtKB"/>
</dbReference>
<dbReference type="GO" id="GO:0071300">
    <property type="term" value="P:cellular response to retinoic acid"/>
    <property type="evidence" value="ECO:0007669"/>
    <property type="project" value="Ensembl"/>
</dbReference>
<dbReference type="GO" id="GO:0002062">
    <property type="term" value="P:chondrocyte differentiation"/>
    <property type="evidence" value="ECO:0000250"/>
    <property type="project" value="BHF-UCL"/>
</dbReference>
<dbReference type="GO" id="GO:0042733">
    <property type="term" value="P:embryonic digit morphogenesis"/>
    <property type="evidence" value="ECO:0000250"/>
    <property type="project" value="BHF-UCL"/>
</dbReference>
<dbReference type="GO" id="GO:0035115">
    <property type="term" value="P:embryonic forelimb morphogenesis"/>
    <property type="evidence" value="ECO:0000250"/>
    <property type="project" value="BHF-UCL"/>
</dbReference>
<dbReference type="GO" id="GO:0035116">
    <property type="term" value="P:embryonic hindlimb morphogenesis"/>
    <property type="evidence" value="ECO:0000250"/>
    <property type="project" value="BHF-UCL"/>
</dbReference>
<dbReference type="GO" id="GO:0072498">
    <property type="term" value="P:embryonic skeletal joint development"/>
    <property type="evidence" value="ECO:0000250"/>
    <property type="project" value="BHF-UCL"/>
</dbReference>
<dbReference type="GO" id="GO:0060272">
    <property type="term" value="P:embryonic skeletal joint morphogenesis"/>
    <property type="evidence" value="ECO:0000250"/>
    <property type="project" value="BHF-UCL"/>
</dbReference>
<dbReference type="GO" id="GO:0036023">
    <property type="term" value="P:embryonic skeletal limb joint morphogenesis"/>
    <property type="evidence" value="ECO:0000250"/>
    <property type="project" value="BHF-UCL"/>
</dbReference>
<dbReference type="GO" id="GO:0008406">
    <property type="term" value="P:gonad development"/>
    <property type="evidence" value="ECO:0007669"/>
    <property type="project" value="Ensembl"/>
</dbReference>
<dbReference type="GO" id="GO:0007507">
    <property type="term" value="P:heart development"/>
    <property type="evidence" value="ECO:0000250"/>
    <property type="project" value="UniProtKB"/>
</dbReference>
<dbReference type="GO" id="GO:0048389">
    <property type="term" value="P:intermediate mesoderm development"/>
    <property type="evidence" value="ECO:0007669"/>
    <property type="project" value="Ensembl"/>
</dbReference>
<dbReference type="GO" id="GO:0072143">
    <property type="term" value="P:mesangial cell development"/>
    <property type="evidence" value="ECO:0000250"/>
    <property type="project" value="UniProtKB"/>
</dbReference>
<dbReference type="GO" id="GO:0072180">
    <property type="term" value="P:mesonephric duct morphogenesis"/>
    <property type="evidence" value="ECO:0000250"/>
    <property type="project" value="UniProtKB"/>
</dbReference>
<dbReference type="GO" id="GO:0001823">
    <property type="term" value="P:mesonephros development"/>
    <property type="evidence" value="ECO:0000250"/>
    <property type="project" value="UniProtKB"/>
</dbReference>
<dbReference type="GO" id="GO:0090094">
    <property type="term" value="P:metanephric cap mesenchymal cell proliferation involved in metanephros development"/>
    <property type="evidence" value="ECO:0000250"/>
    <property type="project" value="UniProtKB"/>
</dbReference>
<dbReference type="GO" id="GO:0072207">
    <property type="term" value="P:metanephric epithelium development"/>
    <property type="evidence" value="ECO:0000250"/>
    <property type="project" value="UniProtKB"/>
</dbReference>
<dbReference type="GO" id="GO:0072239">
    <property type="term" value="P:metanephric glomerulus vasculature development"/>
    <property type="evidence" value="ECO:0000250"/>
    <property type="project" value="UniProtKB"/>
</dbReference>
<dbReference type="GO" id="GO:0072259">
    <property type="term" value="P:metanephric interstitial fibroblast development"/>
    <property type="evidence" value="ECO:0000250"/>
    <property type="project" value="UniProtKB"/>
</dbReference>
<dbReference type="GO" id="GO:0072162">
    <property type="term" value="P:metanephric mesenchymal cell differentiation"/>
    <property type="evidence" value="ECO:0000250"/>
    <property type="project" value="UniProtKB"/>
</dbReference>
<dbReference type="GO" id="GO:0072075">
    <property type="term" value="P:metanephric mesenchyme development"/>
    <property type="evidence" value="ECO:0000250"/>
    <property type="project" value="UniProtKB"/>
</dbReference>
<dbReference type="GO" id="GO:0072133">
    <property type="term" value="P:metanephric mesenchyme morphogenesis"/>
    <property type="evidence" value="ECO:0000250"/>
    <property type="project" value="UniProtKB"/>
</dbReference>
<dbReference type="GO" id="GO:0072234">
    <property type="term" value="P:metanephric nephron tubule development"/>
    <property type="evidence" value="ECO:0000250"/>
    <property type="project" value="UniProtKB"/>
</dbReference>
<dbReference type="GO" id="GO:0072208">
    <property type="term" value="P:metanephric smooth muscle tissue development"/>
    <property type="evidence" value="ECO:0000250"/>
    <property type="project" value="UniProtKB"/>
</dbReference>
<dbReference type="GO" id="GO:0042474">
    <property type="term" value="P:middle ear morphogenesis"/>
    <property type="evidence" value="ECO:0000250"/>
    <property type="project" value="UniProtKB"/>
</dbReference>
<dbReference type="GO" id="GO:0043066">
    <property type="term" value="P:negative regulation of apoptotic process"/>
    <property type="evidence" value="ECO:0000250"/>
    <property type="project" value="UniProtKB"/>
</dbReference>
<dbReference type="GO" id="GO:1905408">
    <property type="term" value="P:negative regulation of creatine transmembrane transporter activity"/>
    <property type="evidence" value="ECO:0000314"/>
    <property type="project" value="ParkinsonsUK-UCL"/>
</dbReference>
<dbReference type="GO" id="GO:0030857">
    <property type="term" value="P:negative regulation of epithelial cell differentiation"/>
    <property type="evidence" value="ECO:0000250"/>
    <property type="project" value="UniProtKB"/>
</dbReference>
<dbReference type="GO" id="GO:0072183">
    <property type="term" value="P:negative regulation of nephron tubule epithelial cell differentiation"/>
    <property type="evidence" value="ECO:0000250"/>
    <property type="project" value="UniProtKB"/>
</dbReference>
<dbReference type="GO" id="GO:2000650">
    <property type="term" value="P:negative regulation of sodium ion transmembrane transporter activity"/>
    <property type="evidence" value="ECO:0000314"/>
    <property type="project" value="ParkinsonsUK-UCL"/>
</dbReference>
<dbReference type="GO" id="GO:0000122">
    <property type="term" value="P:negative regulation of transcription by RNA polymerase II"/>
    <property type="evidence" value="ECO:0000250"/>
    <property type="project" value="BHF-UCL"/>
</dbReference>
<dbReference type="GO" id="GO:0042476">
    <property type="term" value="P:odontogenesis"/>
    <property type="evidence" value="ECO:0000250"/>
    <property type="project" value="UniProtKB"/>
</dbReference>
<dbReference type="GO" id="GO:0072268">
    <property type="term" value="P:pattern specification involved in metanephros development"/>
    <property type="evidence" value="ECO:0000250"/>
    <property type="project" value="UniProtKB"/>
</dbReference>
<dbReference type="GO" id="GO:0007389">
    <property type="term" value="P:pattern specification process"/>
    <property type="evidence" value="ECO:0000318"/>
    <property type="project" value="GO_Central"/>
</dbReference>
<dbReference type="GO" id="GO:0030501">
    <property type="term" value="P:positive regulation of bone mineralization"/>
    <property type="evidence" value="ECO:0000250"/>
    <property type="project" value="BHF-UCL"/>
</dbReference>
<dbReference type="GO" id="GO:0050679">
    <property type="term" value="P:positive regulation of epithelial cell proliferation"/>
    <property type="evidence" value="ECO:0000250"/>
    <property type="project" value="UniProtKB"/>
</dbReference>
<dbReference type="GO" id="GO:2000543">
    <property type="term" value="P:positive regulation of gastrulation"/>
    <property type="evidence" value="ECO:0000315"/>
    <property type="project" value="UniProtKB"/>
</dbReference>
<dbReference type="GO" id="GO:0010628">
    <property type="term" value="P:positive regulation of gene expression"/>
    <property type="evidence" value="ECO:0000250"/>
    <property type="project" value="UniProtKB"/>
</dbReference>
<dbReference type="GO" id="GO:0045944">
    <property type="term" value="P:positive regulation of transcription by RNA polymerase II"/>
    <property type="evidence" value="ECO:0000250"/>
    <property type="project" value="BHF-UCL"/>
</dbReference>
<dbReference type="GO" id="GO:0072166">
    <property type="term" value="P:posterior mesonephric tubule development"/>
    <property type="evidence" value="ECO:0000250"/>
    <property type="project" value="UniProtKB"/>
</dbReference>
<dbReference type="GO" id="GO:0048793">
    <property type="term" value="P:pronephros development"/>
    <property type="evidence" value="ECO:0000315"/>
    <property type="project" value="UniProtKB"/>
</dbReference>
<dbReference type="GO" id="GO:0072184">
    <property type="term" value="P:renal vesicle progenitor cell differentiation"/>
    <property type="evidence" value="ECO:0000250"/>
    <property type="project" value="UniProtKB"/>
</dbReference>
<dbReference type="GO" id="GO:0060021">
    <property type="term" value="P:roof of mouth development"/>
    <property type="evidence" value="ECO:0000250"/>
    <property type="project" value="UniProtKB"/>
</dbReference>
<dbReference type="GO" id="GO:0035725">
    <property type="term" value="P:sodium ion transmembrane transport"/>
    <property type="evidence" value="ECO:0007669"/>
    <property type="project" value="Ensembl"/>
</dbReference>
<dbReference type="GO" id="GO:0072168">
    <property type="term" value="P:specification of anterior mesonephric tubule identity"/>
    <property type="evidence" value="ECO:0000250"/>
    <property type="project" value="UniProtKB"/>
</dbReference>
<dbReference type="GO" id="GO:0072169">
    <property type="term" value="P:specification of posterior mesonephric tubule identity"/>
    <property type="evidence" value="ECO:0000250"/>
    <property type="project" value="UniProtKB"/>
</dbReference>
<dbReference type="GO" id="GO:0048863">
    <property type="term" value="P:stem cell differentiation"/>
    <property type="evidence" value="ECO:0000250"/>
    <property type="project" value="UniProtKB"/>
</dbReference>
<dbReference type="GO" id="GO:0072190">
    <property type="term" value="P:ureter urothelium development"/>
    <property type="evidence" value="ECO:0000250"/>
    <property type="project" value="UniProtKB"/>
</dbReference>
<dbReference type="GO" id="GO:0001657">
    <property type="term" value="P:ureteric bud development"/>
    <property type="evidence" value="ECO:0000250"/>
    <property type="project" value="UniProtKB"/>
</dbReference>
<dbReference type="GO" id="GO:0001655">
    <property type="term" value="P:urogenital system development"/>
    <property type="evidence" value="ECO:0000250"/>
    <property type="project" value="UniProtKB"/>
</dbReference>
<dbReference type="FunFam" id="3.30.160.60:FF:000254">
    <property type="entry name" value="Odd-skipped related transciption factor 1"/>
    <property type="match status" value="1"/>
</dbReference>
<dbReference type="FunFam" id="3.30.160.60:FF:000090">
    <property type="entry name" value="Odd-skipped-related transciption factor 2"/>
    <property type="match status" value="1"/>
</dbReference>
<dbReference type="FunFam" id="3.30.160.60:FF:000311">
    <property type="entry name" value="protein odd-skipped-related 2 isoform X1"/>
    <property type="match status" value="1"/>
</dbReference>
<dbReference type="Gene3D" id="3.30.160.60">
    <property type="entry name" value="Classic Zinc Finger"/>
    <property type="match status" value="3"/>
</dbReference>
<dbReference type="InterPro" id="IPR050717">
    <property type="entry name" value="C2H2-ZF_Transcription_Reg"/>
</dbReference>
<dbReference type="InterPro" id="IPR036236">
    <property type="entry name" value="Znf_C2H2_sf"/>
</dbReference>
<dbReference type="InterPro" id="IPR013087">
    <property type="entry name" value="Znf_C2H2_type"/>
</dbReference>
<dbReference type="PANTHER" id="PTHR14196">
    <property type="entry name" value="ODD-SKIPPED - RELATED"/>
    <property type="match status" value="1"/>
</dbReference>
<dbReference type="PANTHER" id="PTHR14196:SF5">
    <property type="entry name" value="PROTEIN ODD-SKIPPED-RELATED 1"/>
    <property type="match status" value="1"/>
</dbReference>
<dbReference type="Pfam" id="PF00096">
    <property type="entry name" value="zf-C2H2"/>
    <property type="match status" value="3"/>
</dbReference>
<dbReference type="SMART" id="SM00355">
    <property type="entry name" value="ZnF_C2H2"/>
    <property type="match status" value="3"/>
</dbReference>
<dbReference type="SUPFAM" id="SSF57667">
    <property type="entry name" value="beta-beta-alpha zinc fingers"/>
    <property type="match status" value="2"/>
</dbReference>
<dbReference type="PROSITE" id="PS00028">
    <property type="entry name" value="ZINC_FINGER_C2H2_1"/>
    <property type="match status" value="3"/>
</dbReference>
<dbReference type="PROSITE" id="PS50157">
    <property type="entry name" value="ZINC_FINGER_C2H2_2"/>
    <property type="match status" value="3"/>
</dbReference>
<keyword id="KW-0479">Metal-binding</keyword>
<keyword id="KW-0488">Methylation</keyword>
<keyword id="KW-0539">Nucleus</keyword>
<keyword id="KW-1267">Proteomics identification</keyword>
<keyword id="KW-1185">Reference proteome</keyword>
<keyword id="KW-0677">Repeat</keyword>
<keyword id="KW-0804">Transcription</keyword>
<keyword id="KW-0805">Transcription regulation</keyword>
<keyword id="KW-0862">Zinc</keyword>
<keyword id="KW-0863">Zinc-finger</keyword>
<comment type="function">
    <text evidence="1">Transcription factor that plays a role in the regulation of embryonic heart and urogenital development.</text>
</comment>
<comment type="subcellular location">
    <subcellularLocation>
        <location evidence="5">Nucleus</location>
    </subcellularLocation>
</comment>
<comment type="tissue specificity">
    <text evidence="4">Expressed in adult colon, small intestine, prostate, testis, and fetal lung.</text>
</comment>
<comment type="similarity">
    <text evidence="5">Belongs to the Odd C2H2-type zinc-finger protein family.</text>
</comment>
<protein>
    <recommendedName>
        <fullName>Protein odd-skipped-related 1</fullName>
    </recommendedName>
</protein>
<evidence type="ECO:0000250" key="1"/>
<evidence type="ECO:0000250" key="2">
    <source>
        <dbReference type="UniProtKB" id="Q9WVG7"/>
    </source>
</evidence>
<evidence type="ECO:0000255" key="3">
    <source>
        <dbReference type="PROSITE-ProRule" id="PRU00042"/>
    </source>
</evidence>
<evidence type="ECO:0000269" key="4">
    <source>
    </source>
</evidence>
<evidence type="ECO:0000305" key="5"/>
<accession>Q8TAX0</accession>
<accession>B3KV97</accession>
<accession>D6W521</accession>
<organism>
    <name type="scientific">Homo sapiens</name>
    <name type="common">Human</name>
    <dbReference type="NCBI Taxonomy" id="9606"/>
    <lineage>
        <taxon>Eukaryota</taxon>
        <taxon>Metazoa</taxon>
        <taxon>Chordata</taxon>
        <taxon>Craniata</taxon>
        <taxon>Vertebrata</taxon>
        <taxon>Euteleostomi</taxon>
        <taxon>Mammalia</taxon>
        <taxon>Eutheria</taxon>
        <taxon>Euarchontoglires</taxon>
        <taxon>Primates</taxon>
        <taxon>Haplorrhini</taxon>
        <taxon>Catarrhini</taxon>
        <taxon>Hominidae</taxon>
        <taxon>Homo</taxon>
    </lineage>
</organism>
<feature type="chain" id="PRO_0000047004" description="Protein odd-skipped-related 1">
    <location>
        <begin position="1"/>
        <end position="266"/>
    </location>
</feature>
<feature type="zinc finger region" description="C2H2-type 1" evidence="3">
    <location>
        <begin position="175"/>
        <end position="197"/>
    </location>
</feature>
<feature type="zinc finger region" description="C2H2-type 2" evidence="3">
    <location>
        <begin position="203"/>
        <end position="225"/>
    </location>
</feature>
<feature type="zinc finger region" description="C2H2-type 3" evidence="3">
    <location>
        <begin position="231"/>
        <end position="253"/>
    </location>
</feature>
<feature type="modified residue" description="Asymmetric dimethylarginine" evidence="2">
    <location>
        <position position="116"/>
    </location>
</feature>
<feature type="sequence conflict" description="In Ref. 2; BAG53709." evidence="5" ref="2">
    <original>R</original>
    <variation>G</variation>
    <location>
        <position position="214"/>
    </location>
</feature>
<reference key="1">
    <citation type="journal article" date="2002" name="Int. J. Mol. Med.">
        <title>Molecular cloning and characterization of OSR1 on human chromosome 2p24.</title>
        <authorList>
            <person name="Katoh M."/>
        </authorList>
    </citation>
    <scope>NUCLEOTIDE SEQUENCE [MRNA]</scope>
    <scope>TISSUE SPECIFICITY</scope>
</reference>
<reference key="2">
    <citation type="journal article" date="2004" name="Nat. Genet.">
        <title>Complete sequencing and characterization of 21,243 full-length human cDNAs.</title>
        <authorList>
            <person name="Ota T."/>
            <person name="Suzuki Y."/>
            <person name="Nishikawa T."/>
            <person name="Otsuki T."/>
            <person name="Sugiyama T."/>
            <person name="Irie R."/>
            <person name="Wakamatsu A."/>
            <person name="Hayashi K."/>
            <person name="Sato H."/>
            <person name="Nagai K."/>
            <person name="Kimura K."/>
            <person name="Makita H."/>
            <person name="Sekine M."/>
            <person name="Obayashi M."/>
            <person name="Nishi T."/>
            <person name="Shibahara T."/>
            <person name="Tanaka T."/>
            <person name="Ishii S."/>
            <person name="Yamamoto J."/>
            <person name="Saito K."/>
            <person name="Kawai Y."/>
            <person name="Isono Y."/>
            <person name="Nakamura Y."/>
            <person name="Nagahari K."/>
            <person name="Murakami K."/>
            <person name="Yasuda T."/>
            <person name="Iwayanagi T."/>
            <person name="Wagatsuma M."/>
            <person name="Shiratori A."/>
            <person name="Sudo H."/>
            <person name="Hosoiri T."/>
            <person name="Kaku Y."/>
            <person name="Kodaira H."/>
            <person name="Kondo H."/>
            <person name="Sugawara M."/>
            <person name="Takahashi M."/>
            <person name="Kanda K."/>
            <person name="Yokoi T."/>
            <person name="Furuya T."/>
            <person name="Kikkawa E."/>
            <person name="Omura Y."/>
            <person name="Abe K."/>
            <person name="Kamihara K."/>
            <person name="Katsuta N."/>
            <person name="Sato K."/>
            <person name="Tanikawa M."/>
            <person name="Yamazaki M."/>
            <person name="Ninomiya K."/>
            <person name="Ishibashi T."/>
            <person name="Yamashita H."/>
            <person name="Murakawa K."/>
            <person name="Fujimori K."/>
            <person name="Tanai H."/>
            <person name="Kimata M."/>
            <person name="Watanabe M."/>
            <person name="Hiraoka S."/>
            <person name="Chiba Y."/>
            <person name="Ishida S."/>
            <person name="Ono Y."/>
            <person name="Takiguchi S."/>
            <person name="Watanabe S."/>
            <person name="Yosida M."/>
            <person name="Hotuta T."/>
            <person name="Kusano J."/>
            <person name="Kanehori K."/>
            <person name="Takahashi-Fujii A."/>
            <person name="Hara H."/>
            <person name="Tanase T.-O."/>
            <person name="Nomura Y."/>
            <person name="Togiya S."/>
            <person name="Komai F."/>
            <person name="Hara R."/>
            <person name="Takeuchi K."/>
            <person name="Arita M."/>
            <person name="Imose N."/>
            <person name="Musashino K."/>
            <person name="Yuuki H."/>
            <person name="Oshima A."/>
            <person name="Sasaki N."/>
            <person name="Aotsuka S."/>
            <person name="Yoshikawa Y."/>
            <person name="Matsunawa H."/>
            <person name="Ichihara T."/>
            <person name="Shiohata N."/>
            <person name="Sano S."/>
            <person name="Moriya S."/>
            <person name="Momiyama H."/>
            <person name="Satoh N."/>
            <person name="Takami S."/>
            <person name="Terashima Y."/>
            <person name="Suzuki O."/>
            <person name="Nakagawa S."/>
            <person name="Senoh A."/>
            <person name="Mizoguchi H."/>
            <person name="Goto Y."/>
            <person name="Shimizu F."/>
            <person name="Wakebe H."/>
            <person name="Hishigaki H."/>
            <person name="Watanabe T."/>
            <person name="Sugiyama A."/>
            <person name="Takemoto M."/>
            <person name="Kawakami B."/>
            <person name="Yamazaki M."/>
            <person name="Watanabe K."/>
            <person name="Kumagai A."/>
            <person name="Itakura S."/>
            <person name="Fukuzumi Y."/>
            <person name="Fujimori Y."/>
            <person name="Komiyama M."/>
            <person name="Tashiro H."/>
            <person name="Tanigami A."/>
            <person name="Fujiwara T."/>
            <person name="Ono T."/>
            <person name="Yamada K."/>
            <person name="Fujii Y."/>
            <person name="Ozaki K."/>
            <person name="Hirao M."/>
            <person name="Ohmori Y."/>
            <person name="Kawabata A."/>
            <person name="Hikiji T."/>
            <person name="Kobatake N."/>
            <person name="Inagaki H."/>
            <person name="Ikema Y."/>
            <person name="Okamoto S."/>
            <person name="Okitani R."/>
            <person name="Kawakami T."/>
            <person name="Noguchi S."/>
            <person name="Itoh T."/>
            <person name="Shigeta K."/>
            <person name="Senba T."/>
            <person name="Matsumura K."/>
            <person name="Nakajima Y."/>
            <person name="Mizuno T."/>
            <person name="Morinaga M."/>
            <person name="Sasaki M."/>
            <person name="Togashi T."/>
            <person name="Oyama M."/>
            <person name="Hata H."/>
            <person name="Watanabe M."/>
            <person name="Komatsu T."/>
            <person name="Mizushima-Sugano J."/>
            <person name="Satoh T."/>
            <person name="Shirai Y."/>
            <person name="Takahashi Y."/>
            <person name="Nakagawa K."/>
            <person name="Okumura K."/>
            <person name="Nagase T."/>
            <person name="Nomura N."/>
            <person name="Kikuchi H."/>
            <person name="Masuho Y."/>
            <person name="Yamashita R."/>
            <person name="Nakai K."/>
            <person name="Yada T."/>
            <person name="Nakamura Y."/>
            <person name="Ohara O."/>
            <person name="Isogai T."/>
            <person name="Sugano S."/>
        </authorList>
    </citation>
    <scope>NUCLEOTIDE SEQUENCE [LARGE SCALE MRNA]</scope>
    <source>
        <tissue>Brain</tissue>
    </source>
</reference>
<reference key="3">
    <citation type="submission" date="2005-04" db="EMBL/GenBank/DDBJ databases">
        <authorList>
            <consortium name="NIEHS SNPs program"/>
        </authorList>
    </citation>
    <scope>NUCLEOTIDE SEQUENCE [GENOMIC DNA]</scope>
</reference>
<reference key="4">
    <citation type="journal article" date="2005" name="Nature">
        <title>Generation and annotation of the DNA sequences of human chromosomes 2 and 4.</title>
        <authorList>
            <person name="Hillier L.W."/>
            <person name="Graves T.A."/>
            <person name="Fulton R.S."/>
            <person name="Fulton L.A."/>
            <person name="Pepin K.H."/>
            <person name="Minx P."/>
            <person name="Wagner-McPherson C."/>
            <person name="Layman D."/>
            <person name="Wylie K."/>
            <person name="Sekhon M."/>
            <person name="Becker M.C."/>
            <person name="Fewell G.A."/>
            <person name="Delehaunty K.D."/>
            <person name="Miner T.L."/>
            <person name="Nash W.E."/>
            <person name="Kremitzki C."/>
            <person name="Oddy L."/>
            <person name="Du H."/>
            <person name="Sun H."/>
            <person name="Bradshaw-Cordum H."/>
            <person name="Ali J."/>
            <person name="Carter J."/>
            <person name="Cordes M."/>
            <person name="Harris A."/>
            <person name="Isak A."/>
            <person name="van Brunt A."/>
            <person name="Nguyen C."/>
            <person name="Du F."/>
            <person name="Courtney L."/>
            <person name="Kalicki J."/>
            <person name="Ozersky P."/>
            <person name="Abbott S."/>
            <person name="Armstrong J."/>
            <person name="Belter E.A."/>
            <person name="Caruso L."/>
            <person name="Cedroni M."/>
            <person name="Cotton M."/>
            <person name="Davidson T."/>
            <person name="Desai A."/>
            <person name="Elliott G."/>
            <person name="Erb T."/>
            <person name="Fronick C."/>
            <person name="Gaige T."/>
            <person name="Haakenson W."/>
            <person name="Haglund K."/>
            <person name="Holmes A."/>
            <person name="Harkins R."/>
            <person name="Kim K."/>
            <person name="Kruchowski S.S."/>
            <person name="Strong C.M."/>
            <person name="Grewal N."/>
            <person name="Goyea E."/>
            <person name="Hou S."/>
            <person name="Levy A."/>
            <person name="Martinka S."/>
            <person name="Mead K."/>
            <person name="McLellan M.D."/>
            <person name="Meyer R."/>
            <person name="Randall-Maher J."/>
            <person name="Tomlinson C."/>
            <person name="Dauphin-Kohlberg S."/>
            <person name="Kozlowicz-Reilly A."/>
            <person name="Shah N."/>
            <person name="Swearengen-Shahid S."/>
            <person name="Snider J."/>
            <person name="Strong J.T."/>
            <person name="Thompson J."/>
            <person name="Yoakum M."/>
            <person name="Leonard S."/>
            <person name="Pearman C."/>
            <person name="Trani L."/>
            <person name="Radionenko M."/>
            <person name="Waligorski J.E."/>
            <person name="Wang C."/>
            <person name="Rock S.M."/>
            <person name="Tin-Wollam A.-M."/>
            <person name="Maupin R."/>
            <person name="Latreille P."/>
            <person name="Wendl M.C."/>
            <person name="Yang S.-P."/>
            <person name="Pohl C."/>
            <person name="Wallis J.W."/>
            <person name="Spieth J."/>
            <person name="Bieri T.A."/>
            <person name="Berkowicz N."/>
            <person name="Nelson J.O."/>
            <person name="Osborne J."/>
            <person name="Ding L."/>
            <person name="Meyer R."/>
            <person name="Sabo A."/>
            <person name="Shotland Y."/>
            <person name="Sinha P."/>
            <person name="Wohldmann P.E."/>
            <person name="Cook L.L."/>
            <person name="Hickenbotham M.T."/>
            <person name="Eldred J."/>
            <person name="Williams D."/>
            <person name="Jones T.A."/>
            <person name="She X."/>
            <person name="Ciccarelli F.D."/>
            <person name="Izaurralde E."/>
            <person name="Taylor J."/>
            <person name="Schmutz J."/>
            <person name="Myers R.M."/>
            <person name="Cox D.R."/>
            <person name="Huang X."/>
            <person name="McPherson J.D."/>
            <person name="Mardis E.R."/>
            <person name="Clifton S.W."/>
            <person name="Warren W.C."/>
            <person name="Chinwalla A.T."/>
            <person name="Eddy S.R."/>
            <person name="Marra M.A."/>
            <person name="Ovcharenko I."/>
            <person name="Furey T.S."/>
            <person name="Miller W."/>
            <person name="Eichler E.E."/>
            <person name="Bork P."/>
            <person name="Suyama M."/>
            <person name="Torrents D."/>
            <person name="Waterston R.H."/>
            <person name="Wilson R.K."/>
        </authorList>
    </citation>
    <scope>NUCLEOTIDE SEQUENCE [LARGE SCALE GENOMIC DNA]</scope>
</reference>
<reference key="5">
    <citation type="submission" date="2005-09" db="EMBL/GenBank/DDBJ databases">
        <authorList>
            <person name="Mural R.J."/>
            <person name="Istrail S."/>
            <person name="Sutton G.G."/>
            <person name="Florea L."/>
            <person name="Halpern A.L."/>
            <person name="Mobarry C.M."/>
            <person name="Lippert R."/>
            <person name="Walenz B."/>
            <person name="Shatkay H."/>
            <person name="Dew I."/>
            <person name="Miller J.R."/>
            <person name="Flanigan M.J."/>
            <person name="Edwards N.J."/>
            <person name="Bolanos R."/>
            <person name="Fasulo D."/>
            <person name="Halldorsson B.V."/>
            <person name="Hannenhalli S."/>
            <person name="Turner R."/>
            <person name="Yooseph S."/>
            <person name="Lu F."/>
            <person name="Nusskern D.R."/>
            <person name="Shue B.C."/>
            <person name="Zheng X.H."/>
            <person name="Zhong F."/>
            <person name="Delcher A.L."/>
            <person name="Huson D.H."/>
            <person name="Kravitz S.A."/>
            <person name="Mouchard L."/>
            <person name="Reinert K."/>
            <person name="Remington K.A."/>
            <person name="Clark A.G."/>
            <person name="Waterman M.S."/>
            <person name="Eichler E.E."/>
            <person name="Adams M.D."/>
            <person name="Hunkapiller M.W."/>
            <person name="Myers E.W."/>
            <person name="Venter J.C."/>
        </authorList>
    </citation>
    <scope>NUCLEOTIDE SEQUENCE [LARGE SCALE GENOMIC DNA]</scope>
</reference>
<reference key="6">
    <citation type="journal article" date="2004" name="Genome Res.">
        <title>The status, quality, and expansion of the NIH full-length cDNA project: the Mammalian Gene Collection (MGC).</title>
        <authorList>
            <consortium name="The MGC Project Team"/>
        </authorList>
    </citation>
    <scope>NUCLEOTIDE SEQUENCE [LARGE SCALE MRNA]</scope>
    <source>
        <tissue>Pancreas</tissue>
    </source>
</reference>
<name>OSR1_HUMAN</name>
<gene>
    <name type="primary">OSR1</name>
    <name type="synonym">ODD</name>
</gene>
<proteinExistence type="evidence at protein level"/>